<protein>
    <recommendedName>
        <fullName evidence="1">4-hydroxy-3-methylbut-2-en-1-yl diphosphate synthase (flavodoxin)</fullName>
        <ecNumber evidence="1">1.17.7.3</ecNumber>
    </recommendedName>
    <alternativeName>
        <fullName evidence="1">1-hydroxy-2-methyl-2-(E)-butenyl 4-diphosphate synthase</fullName>
    </alternativeName>
</protein>
<dbReference type="EC" id="1.17.7.3" evidence="1"/>
<dbReference type="EMBL" id="CP000227">
    <property type="protein sequence ID" value="ACM14491.1"/>
    <property type="molecule type" value="Genomic_DNA"/>
</dbReference>
<dbReference type="SMR" id="B9IY45"/>
<dbReference type="KEGG" id="bcq:BCQ_4064"/>
<dbReference type="HOGENOM" id="CLU_042258_0_0_9"/>
<dbReference type="UniPathway" id="UPA00056">
    <property type="reaction ID" value="UER00096"/>
</dbReference>
<dbReference type="Proteomes" id="UP000000441">
    <property type="component" value="Chromosome"/>
</dbReference>
<dbReference type="GO" id="GO:0051539">
    <property type="term" value="F:4 iron, 4 sulfur cluster binding"/>
    <property type="evidence" value="ECO:0007669"/>
    <property type="project" value="UniProtKB-UniRule"/>
</dbReference>
<dbReference type="GO" id="GO:0046429">
    <property type="term" value="F:4-hydroxy-3-methylbut-2-en-1-yl diphosphate synthase activity (ferredoxin)"/>
    <property type="evidence" value="ECO:0007669"/>
    <property type="project" value="UniProtKB-UniRule"/>
</dbReference>
<dbReference type="GO" id="GO:0141197">
    <property type="term" value="F:4-hydroxy-3-methylbut-2-enyl-diphosphate synthase activity (flavodoxin)"/>
    <property type="evidence" value="ECO:0007669"/>
    <property type="project" value="UniProtKB-EC"/>
</dbReference>
<dbReference type="GO" id="GO:0005506">
    <property type="term" value="F:iron ion binding"/>
    <property type="evidence" value="ECO:0007669"/>
    <property type="project" value="InterPro"/>
</dbReference>
<dbReference type="GO" id="GO:0019288">
    <property type="term" value="P:isopentenyl diphosphate biosynthetic process, methylerythritol 4-phosphate pathway"/>
    <property type="evidence" value="ECO:0007669"/>
    <property type="project" value="UniProtKB-UniRule"/>
</dbReference>
<dbReference type="GO" id="GO:0016114">
    <property type="term" value="P:terpenoid biosynthetic process"/>
    <property type="evidence" value="ECO:0007669"/>
    <property type="project" value="InterPro"/>
</dbReference>
<dbReference type="FunFam" id="3.20.20.20:FF:000001">
    <property type="entry name" value="4-hydroxy-3-methylbut-2-en-1-yl diphosphate synthase (flavodoxin)"/>
    <property type="match status" value="1"/>
</dbReference>
<dbReference type="FunFam" id="3.30.413.10:FF:000005">
    <property type="entry name" value="4-hydroxy-3-methylbut-2-en-1-yl diphosphate synthase (flavodoxin)"/>
    <property type="match status" value="1"/>
</dbReference>
<dbReference type="Gene3D" id="3.20.20.20">
    <property type="entry name" value="Dihydropteroate synthase-like"/>
    <property type="match status" value="1"/>
</dbReference>
<dbReference type="Gene3D" id="3.30.413.10">
    <property type="entry name" value="Sulfite Reductase Hemoprotein, domain 1"/>
    <property type="match status" value="1"/>
</dbReference>
<dbReference type="HAMAP" id="MF_00159">
    <property type="entry name" value="IspG"/>
    <property type="match status" value="1"/>
</dbReference>
<dbReference type="InterPro" id="IPR011005">
    <property type="entry name" value="Dihydropteroate_synth-like_sf"/>
</dbReference>
<dbReference type="InterPro" id="IPR016425">
    <property type="entry name" value="IspG_bac"/>
</dbReference>
<dbReference type="InterPro" id="IPR004588">
    <property type="entry name" value="IspG_bac-typ"/>
</dbReference>
<dbReference type="InterPro" id="IPR045854">
    <property type="entry name" value="NO2/SO3_Rdtase_4Fe4S_sf"/>
</dbReference>
<dbReference type="NCBIfam" id="TIGR00612">
    <property type="entry name" value="ispG_gcpE"/>
    <property type="match status" value="1"/>
</dbReference>
<dbReference type="NCBIfam" id="NF001540">
    <property type="entry name" value="PRK00366.1"/>
    <property type="match status" value="1"/>
</dbReference>
<dbReference type="PANTHER" id="PTHR30454">
    <property type="entry name" value="4-HYDROXY-3-METHYLBUT-2-EN-1-YL DIPHOSPHATE SYNTHASE"/>
    <property type="match status" value="1"/>
</dbReference>
<dbReference type="PANTHER" id="PTHR30454:SF0">
    <property type="entry name" value="4-HYDROXY-3-METHYLBUT-2-EN-1-YL DIPHOSPHATE SYNTHASE (FERREDOXIN), CHLOROPLASTIC"/>
    <property type="match status" value="1"/>
</dbReference>
<dbReference type="Pfam" id="PF04551">
    <property type="entry name" value="GcpE"/>
    <property type="match status" value="1"/>
</dbReference>
<dbReference type="PIRSF" id="PIRSF004640">
    <property type="entry name" value="IspG"/>
    <property type="match status" value="1"/>
</dbReference>
<dbReference type="SUPFAM" id="SSF51717">
    <property type="entry name" value="Dihydropteroate synthetase-like"/>
    <property type="match status" value="1"/>
</dbReference>
<dbReference type="SUPFAM" id="SSF56014">
    <property type="entry name" value="Nitrite and sulphite reductase 4Fe-4S domain-like"/>
    <property type="match status" value="1"/>
</dbReference>
<proteinExistence type="inferred from homology"/>
<organism>
    <name type="scientific">Bacillus cereus (strain Q1)</name>
    <dbReference type="NCBI Taxonomy" id="361100"/>
    <lineage>
        <taxon>Bacteria</taxon>
        <taxon>Bacillati</taxon>
        <taxon>Bacillota</taxon>
        <taxon>Bacilli</taxon>
        <taxon>Bacillales</taxon>
        <taxon>Bacillaceae</taxon>
        <taxon>Bacillus</taxon>
        <taxon>Bacillus cereus group</taxon>
    </lineage>
</organism>
<gene>
    <name evidence="1" type="primary">ispG</name>
    <name type="ordered locus">BCQ_4064</name>
</gene>
<evidence type="ECO:0000255" key="1">
    <source>
        <dbReference type="HAMAP-Rule" id="MF_00159"/>
    </source>
</evidence>
<keyword id="KW-0004">4Fe-4S</keyword>
<keyword id="KW-0408">Iron</keyword>
<keyword id="KW-0411">Iron-sulfur</keyword>
<keyword id="KW-0414">Isoprene biosynthesis</keyword>
<keyword id="KW-0479">Metal-binding</keyword>
<keyword id="KW-0560">Oxidoreductase</keyword>
<name>ISPG_BACCQ</name>
<accession>B9IY45</accession>
<feature type="chain" id="PRO_1000123436" description="4-hydroxy-3-methylbut-2-en-1-yl diphosphate synthase (flavodoxin)">
    <location>
        <begin position="1"/>
        <end position="367"/>
    </location>
</feature>
<feature type="binding site" evidence="1">
    <location>
        <position position="265"/>
    </location>
    <ligand>
        <name>[4Fe-4S] cluster</name>
        <dbReference type="ChEBI" id="CHEBI:49883"/>
    </ligand>
</feature>
<feature type="binding site" evidence="1">
    <location>
        <position position="268"/>
    </location>
    <ligand>
        <name>[4Fe-4S] cluster</name>
        <dbReference type="ChEBI" id="CHEBI:49883"/>
    </ligand>
</feature>
<feature type="binding site" evidence="1">
    <location>
        <position position="300"/>
    </location>
    <ligand>
        <name>[4Fe-4S] cluster</name>
        <dbReference type="ChEBI" id="CHEBI:49883"/>
    </ligand>
</feature>
<feature type="binding site" evidence="1">
    <location>
        <position position="307"/>
    </location>
    <ligand>
        <name>[4Fe-4S] cluster</name>
        <dbReference type="ChEBI" id="CHEBI:49883"/>
    </ligand>
</feature>
<sequence length="367" mass="39626">MTHRTKTRPVKVGNLTIGGNNELIIQSMTTTKTHDVEATVAEIKRLEEAGCQVVRVAVPDERAANAIADIKKQINIPLVADIHFDYRLALKAIEGGIDKVRINPGNIGRRHKVEAVVNAAKERGIPIRIGVNAGSLERHILEKYGYPTADGMVESALHHIKILEDLDFHDIIVSMKASDVNLAIEAYEKAARAFDYPLHLGITESGTLFAGTVKSAAGLGAILSKGIGNTLRISLSADPVEEVKVARELLKSFGLASNAATLISCPTCGRIEIDLISIANEVEEYISTLQVPIKVAVLGCAVNGPGEAREADIGIAGARGEGLLFRKGQVVRKVPEEIMVEELKKEIDVIAAEMAAEREKEKETQEQ</sequence>
<reference key="1">
    <citation type="journal article" date="2009" name="J. Bacteriol.">
        <title>Complete genome sequence of the extremophilic Bacillus cereus strain Q1 with industrial applications.</title>
        <authorList>
            <person name="Xiong Z."/>
            <person name="Jiang Y."/>
            <person name="Qi D."/>
            <person name="Lu H."/>
            <person name="Yang F."/>
            <person name="Yang J."/>
            <person name="Chen L."/>
            <person name="Sun L."/>
            <person name="Xu X."/>
            <person name="Xue Y."/>
            <person name="Zhu Y."/>
            <person name="Jin Q."/>
        </authorList>
    </citation>
    <scope>NUCLEOTIDE SEQUENCE [LARGE SCALE GENOMIC DNA]</scope>
    <source>
        <strain>Q1</strain>
    </source>
</reference>
<comment type="function">
    <text evidence="1">Converts 2C-methyl-D-erythritol 2,4-cyclodiphosphate (ME-2,4cPP) into 1-hydroxy-2-methyl-2-(E)-butenyl 4-diphosphate.</text>
</comment>
<comment type="catalytic activity">
    <reaction evidence="1">
        <text>(2E)-4-hydroxy-3-methylbut-2-enyl diphosphate + oxidized [flavodoxin] + H2O + 2 H(+) = 2-C-methyl-D-erythritol 2,4-cyclic diphosphate + reduced [flavodoxin]</text>
        <dbReference type="Rhea" id="RHEA:43604"/>
        <dbReference type="Rhea" id="RHEA-COMP:10622"/>
        <dbReference type="Rhea" id="RHEA-COMP:10623"/>
        <dbReference type="ChEBI" id="CHEBI:15377"/>
        <dbReference type="ChEBI" id="CHEBI:15378"/>
        <dbReference type="ChEBI" id="CHEBI:57618"/>
        <dbReference type="ChEBI" id="CHEBI:58210"/>
        <dbReference type="ChEBI" id="CHEBI:58483"/>
        <dbReference type="ChEBI" id="CHEBI:128753"/>
        <dbReference type="EC" id="1.17.7.3"/>
    </reaction>
</comment>
<comment type="cofactor">
    <cofactor evidence="1">
        <name>[4Fe-4S] cluster</name>
        <dbReference type="ChEBI" id="CHEBI:49883"/>
    </cofactor>
    <text evidence="1">Binds 1 [4Fe-4S] cluster.</text>
</comment>
<comment type="pathway">
    <text evidence="1">Isoprenoid biosynthesis; isopentenyl diphosphate biosynthesis via DXP pathway; isopentenyl diphosphate from 1-deoxy-D-xylulose 5-phosphate: step 5/6.</text>
</comment>
<comment type="similarity">
    <text evidence="1">Belongs to the IspG family.</text>
</comment>